<feature type="transit peptide" description="Mitochondrion" evidence="3">
    <location>
        <begin position="1"/>
        <end position="26"/>
    </location>
</feature>
<feature type="chain" id="PRO_0000327926" description="Probable methylmalonate-semialdehyde/malonate-semialdehyde dehydrogenase [acylating], mitochondrial">
    <location>
        <begin position="27"/>
        <end position="528"/>
    </location>
</feature>
<feature type="active site" description="Nucleophile" evidence="4">
    <location>
        <position position="307"/>
    </location>
</feature>
<feature type="binding site" evidence="1">
    <location>
        <position position="175"/>
    </location>
    <ligand>
        <name>NAD(+)</name>
        <dbReference type="ChEBI" id="CHEBI:57540"/>
    </ligand>
</feature>
<feature type="binding site" evidence="1">
    <location>
        <position position="199"/>
    </location>
    <ligand>
        <name>NAD(+)</name>
        <dbReference type="ChEBI" id="CHEBI:57540"/>
    </ligand>
</feature>
<feature type="binding site" evidence="1">
    <location>
        <position position="202"/>
    </location>
    <ligand>
        <name>NAD(+)</name>
        <dbReference type="ChEBI" id="CHEBI:57540"/>
    </ligand>
</feature>
<feature type="binding site" evidence="1">
    <location>
        <position position="203"/>
    </location>
    <ligand>
        <name>NAD(+)</name>
        <dbReference type="ChEBI" id="CHEBI:57540"/>
    </ligand>
</feature>
<feature type="binding site" evidence="1">
    <location>
        <position position="408"/>
    </location>
    <ligand>
        <name>NAD(+)</name>
        <dbReference type="ChEBI" id="CHEBI:57540"/>
    </ligand>
</feature>
<name>MMSA_DICDI</name>
<protein>
    <recommendedName>
        <fullName evidence="2">Probable methylmalonate-semialdehyde/malonate-semialdehyde dehydrogenase [acylating], mitochondrial</fullName>
        <shortName evidence="2">MMSDH</shortName>
        <ecNumber evidence="2">1.2.1.27</ecNumber>
    </recommendedName>
    <alternativeName>
        <fullName evidence="2">Malonate-semialdehyde dehydrogenase [acylating]</fullName>
    </alternativeName>
</protein>
<gene>
    <name type="primary">mmsdh</name>
    <name type="synonym">aldh6</name>
    <name type="ORF">DDB_G0289085</name>
</gene>
<accession>Q54I10</accession>
<comment type="function">
    <text evidence="2">Probable malonate and methylmalonate semialdehyde dehydrogenase involved in the catabolism of valine, thymine, and compounds catabolized by way of beta-alanine, including uracil and cytidine.</text>
</comment>
<comment type="catalytic activity">
    <reaction evidence="2">
        <text>2-methyl-3-oxopropanoate + NAD(+) + CoA + H2O = propanoyl-CoA + hydrogencarbonate + NADH + H(+)</text>
        <dbReference type="Rhea" id="RHEA:20804"/>
        <dbReference type="ChEBI" id="CHEBI:15377"/>
        <dbReference type="ChEBI" id="CHEBI:15378"/>
        <dbReference type="ChEBI" id="CHEBI:17544"/>
        <dbReference type="ChEBI" id="CHEBI:57287"/>
        <dbReference type="ChEBI" id="CHEBI:57392"/>
        <dbReference type="ChEBI" id="CHEBI:57540"/>
        <dbReference type="ChEBI" id="CHEBI:57700"/>
        <dbReference type="ChEBI" id="CHEBI:57945"/>
        <dbReference type="EC" id="1.2.1.27"/>
    </reaction>
    <physiologicalReaction direction="left-to-right" evidence="2">
        <dbReference type="Rhea" id="RHEA:20805"/>
    </physiologicalReaction>
</comment>
<comment type="catalytic activity">
    <reaction evidence="2">
        <text>3-oxopropanoate + NAD(+) + CoA + H2O = hydrogencarbonate + acetyl-CoA + NADH + H(+)</text>
        <dbReference type="Rhea" id="RHEA:76615"/>
        <dbReference type="ChEBI" id="CHEBI:15377"/>
        <dbReference type="ChEBI" id="CHEBI:15378"/>
        <dbReference type="ChEBI" id="CHEBI:17544"/>
        <dbReference type="ChEBI" id="CHEBI:33190"/>
        <dbReference type="ChEBI" id="CHEBI:57287"/>
        <dbReference type="ChEBI" id="CHEBI:57288"/>
        <dbReference type="ChEBI" id="CHEBI:57540"/>
        <dbReference type="ChEBI" id="CHEBI:57945"/>
        <dbReference type="EC" id="1.2.1.27"/>
    </reaction>
    <physiologicalReaction direction="left-to-right" evidence="2">
        <dbReference type="Rhea" id="RHEA:76616"/>
    </physiologicalReaction>
</comment>
<comment type="subunit">
    <text evidence="2">Homotetramer.</text>
</comment>
<comment type="subcellular location">
    <subcellularLocation>
        <location evidence="2">Mitochondrion</location>
    </subcellularLocation>
</comment>
<comment type="similarity">
    <text evidence="5">Belongs to the aldehyde dehydrogenase family.</text>
</comment>
<organism>
    <name type="scientific">Dictyostelium discoideum</name>
    <name type="common">Social amoeba</name>
    <dbReference type="NCBI Taxonomy" id="44689"/>
    <lineage>
        <taxon>Eukaryota</taxon>
        <taxon>Amoebozoa</taxon>
        <taxon>Evosea</taxon>
        <taxon>Eumycetozoa</taxon>
        <taxon>Dictyostelia</taxon>
        <taxon>Dictyosteliales</taxon>
        <taxon>Dictyosteliaceae</taxon>
        <taxon>Dictyostelium</taxon>
    </lineage>
</organism>
<evidence type="ECO:0000250" key="1">
    <source>
        <dbReference type="UniProtKB" id="P42412"/>
    </source>
</evidence>
<evidence type="ECO:0000250" key="2">
    <source>
        <dbReference type="UniProtKB" id="Q02253"/>
    </source>
</evidence>
<evidence type="ECO:0000255" key="3"/>
<evidence type="ECO:0000255" key="4">
    <source>
        <dbReference type="PROSITE-ProRule" id="PRU10008"/>
    </source>
</evidence>
<evidence type="ECO:0000305" key="5"/>
<proteinExistence type="inferred from homology"/>
<keyword id="KW-0496">Mitochondrion</keyword>
<keyword id="KW-0520">NAD</keyword>
<keyword id="KW-0560">Oxidoreductase</keyword>
<keyword id="KW-1185">Reference proteome</keyword>
<keyword id="KW-0809">Transit peptide</keyword>
<sequence length="528" mass="56696">MLSFKFAKSASKVIGNRNFHSSSASLANTTKLFINGKFVESKTKEWLEVRNPATQELVTKVPVSTKEEMEAAVKAASDAFPAWRDTSVSNRSRIISNYKNLINKNMDKIAAIITEEQGKTLPDAKGDVFRGLEVVEHSVNVASLMMGETVENVSKNVDIYSYVQPLGVCAGITPFNFPAMIPLWMFPLAIACGNTFVLKPSERVPSASMFLVQLAQEAGVPDGVVNVIHGGKEAVNFICDAPEVRAISFVGADQAGRHIHARGTANGKRVQSNMAAKNHATIVPDAHKERTLDALTGAAFGASGQRCMALSAAVFVGESKNWIPELAERAKKLKVAGGAAPGADLGPVISAASKQRIHELIQSGIDEGAKCILDGRNVVVDPEFSKGNFVGPTILTDVKPHMRCYKEEIFGPVLVCLNVDTVDQAIQLINANPYGNGTAVFTSSGAVARKYQREIDVGQVGINLPIPVPLPFFSFTGSRGSFVGAGHFYGKTGVQFFTQIKTITSNWRDDDISHGVSSSMNMPILGKN</sequence>
<dbReference type="EC" id="1.2.1.27" evidence="2"/>
<dbReference type="EMBL" id="AAFI02000130">
    <property type="protein sequence ID" value="EAL62892.1"/>
    <property type="molecule type" value="Genomic_DNA"/>
</dbReference>
<dbReference type="RefSeq" id="XP_636395.1">
    <property type="nucleotide sequence ID" value="XM_631303.1"/>
</dbReference>
<dbReference type="SMR" id="Q54I10"/>
<dbReference type="FunCoup" id="Q54I10">
    <property type="interactions" value="552"/>
</dbReference>
<dbReference type="STRING" id="44689.Q54I10"/>
<dbReference type="PaxDb" id="44689-DDB0231483"/>
<dbReference type="EnsemblProtists" id="EAL62892">
    <property type="protein sequence ID" value="EAL62892"/>
    <property type="gene ID" value="DDB_G0289085"/>
</dbReference>
<dbReference type="GeneID" id="8626954"/>
<dbReference type="KEGG" id="ddi:DDB_G0289085"/>
<dbReference type="dictyBase" id="DDB_G0289085">
    <property type="gene designation" value="mmsdh"/>
</dbReference>
<dbReference type="VEuPathDB" id="AmoebaDB:DDB_G0289085"/>
<dbReference type="eggNOG" id="KOG2449">
    <property type="taxonomic scope" value="Eukaryota"/>
</dbReference>
<dbReference type="HOGENOM" id="CLU_005391_1_10_1"/>
<dbReference type="InParanoid" id="Q54I10"/>
<dbReference type="OMA" id="GGAKNHI"/>
<dbReference type="PhylomeDB" id="Q54I10"/>
<dbReference type="Reactome" id="R-DDI-70895">
    <property type="pathway name" value="Branched-chain amino acid catabolism"/>
</dbReference>
<dbReference type="PRO" id="PR:Q54I10"/>
<dbReference type="Proteomes" id="UP000002195">
    <property type="component" value="Chromosome 5"/>
</dbReference>
<dbReference type="GO" id="GO:0005739">
    <property type="term" value="C:mitochondrion"/>
    <property type="evidence" value="ECO:0000250"/>
    <property type="project" value="dictyBase"/>
</dbReference>
<dbReference type="GO" id="GO:0018478">
    <property type="term" value="F:malonate-semialdehyde dehydrogenase (acetylating) activity"/>
    <property type="evidence" value="ECO:0007669"/>
    <property type="project" value="UniProtKB-EC"/>
</dbReference>
<dbReference type="GO" id="GO:0004491">
    <property type="term" value="F:methylmalonate-semialdehyde dehydrogenase (acylating, NAD) activity"/>
    <property type="evidence" value="ECO:0000250"/>
    <property type="project" value="dictyBase"/>
</dbReference>
<dbReference type="GO" id="GO:0006210">
    <property type="term" value="P:thymine catabolic process"/>
    <property type="evidence" value="ECO:0000318"/>
    <property type="project" value="GO_Central"/>
</dbReference>
<dbReference type="GO" id="GO:0006574">
    <property type="term" value="P:valine catabolic process"/>
    <property type="evidence" value="ECO:0000318"/>
    <property type="project" value="GO_Central"/>
</dbReference>
<dbReference type="CDD" id="cd07085">
    <property type="entry name" value="ALDH_F6_MMSDH"/>
    <property type="match status" value="1"/>
</dbReference>
<dbReference type="FunFam" id="3.40.309.10:FF:000002">
    <property type="entry name" value="Methylmalonate-semialdehyde dehydrogenase (Acylating)"/>
    <property type="match status" value="1"/>
</dbReference>
<dbReference type="FunFam" id="3.40.605.10:FF:000003">
    <property type="entry name" value="Methylmalonate-semialdehyde dehydrogenase [acylating]"/>
    <property type="match status" value="1"/>
</dbReference>
<dbReference type="Gene3D" id="3.40.605.10">
    <property type="entry name" value="Aldehyde Dehydrogenase, Chain A, domain 1"/>
    <property type="match status" value="1"/>
</dbReference>
<dbReference type="Gene3D" id="3.40.309.10">
    <property type="entry name" value="Aldehyde Dehydrogenase, Chain A, domain 2"/>
    <property type="match status" value="1"/>
</dbReference>
<dbReference type="InterPro" id="IPR016161">
    <property type="entry name" value="Ald_DH/histidinol_DH"/>
</dbReference>
<dbReference type="InterPro" id="IPR016163">
    <property type="entry name" value="Ald_DH_C"/>
</dbReference>
<dbReference type="InterPro" id="IPR016160">
    <property type="entry name" value="Ald_DH_CS_CYS"/>
</dbReference>
<dbReference type="InterPro" id="IPR016162">
    <property type="entry name" value="Ald_DH_N"/>
</dbReference>
<dbReference type="InterPro" id="IPR015590">
    <property type="entry name" value="Aldehyde_DH_dom"/>
</dbReference>
<dbReference type="InterPro" id="IPR010061">
    <property type="entry name" value="MeMal-semiAld_DH"/>
</dbReference>
<dbReference type="NCBIfam" id="TIGR01722">
    <property type="entry name" value="MMSDH"/>
    <property type="match status" value="1"/>
</dbReference>
<dbReference type="PANTHER" id="PTHR43866">
    <property type="entry name" value="MALONATE-SEMIALDEHYDE DEHYDROGENASE"/>
    <property type="match status" value="1"/>
</dbReference>
<dbReference type="PANTHER" id="PTHR43866:SF3">
    <property type="entry name" value="METHYLMALONATE-SEMIALDEHYDE DEHYDROGENASE [ACYLATING], MITOCHONDRIAL"/>
    <property type="match status" value="1"/>
</dbReference>
<dbReference type="Pfam" id="PF00171">
    <property type="entry name" value="Aldedh"/>
    <property type="match status" value="1"/>
</dbReference>
<dbReference type="SUPFAM" id="SSF53720">
    <property type="entry name" value="ALDH-like"/>
    <property type="match status" value="1"/>
</dbReference>
<dbReference type="PROSITE" id="PS00070">
    <property type="entry name" value="ALDEHYDE_DEHYDR_CYS"/>
    <property type="match status" value="1"/>
</dbReference>
<reference key="1">
    <citation type="journal article" date="2005" name="Nature">
        <title>The genome of the social amoeba Dictyostelium discoideum.</title>
        <authorList>
            <person name="Eichinger L."/>
            <person name="Pachebat J.A."/>
            <person name="Gloeckner G."/>
            <person name="Rajandream M.A."/>
            <person name="Sucgang R."/>
            <person name="Berriman M."/>
            <person name="Song J."/>
            <person name="Olsen R."/>
            <person name="Szafranski K."/>
            <person name="Xu Q."/>
            <person name="Tunggal B."/>
            <person name="Kummerfeld S."/>
            <person name="Madera M."/>
            <person name="Konfortov B.A."/>
            <person name="Rivero F."/>
            <person name="Bankier A.T."/>
            <person name="Lehmann R."/>
            <person name="Hamlin N."/>
            <person name="Davies R."/>
            <person name="Gaudet P."/>
            <person name="Fey P."/>
            <person name="Pilcher K."/>
            <person name="Chen G."/>
            <person name="Saunders D."/>
            <person name="Sodergren E.J."/>
            <person name="Davis P."/>
            <person name="Kerhornou A."/>
            <person name="Nie X."/>
            <person name="Hall N."/>
            <person name="Anjard C."/>
            <person name="Hemphill L."/>
            <person name="Bason N."/>
            <person name="Farbrother P."/>
            <person name="Desany B."/>
            <person name="Just E."/>
            <person name="Morio T."/>
            <person name="Rost R."/>
            <person name="Churcher C.M."/>
            <person name="Cooper J."/>
            <person name="Haydock S."/>
            <person name="van Driessche N."/>
            <person name="Cronin A."/>
            <person name="Goodhead I."/>
            <person name="Muzny D.M."/>
            <person name="Mourier T."/>
            <person name="Pain A."/>
            <person name="Lu M."/>
            <person name="Harper D."/>
            <person name="Lindsay R."/>
            <person name="Hauser H."/>
            <person name="James K.D."/>
            <person name="Quiles M."/>
            <person name="Madan Babu M."/>
            <person name="Saito T."/>
            <person name="Buchrieser C."/>
            <person name="Wardroper A."/>
            <person name="Felder M."/>
            <person name="Thangavelu M."/>
            <person name="Johnson D."/>
            <person name="Knights A."/>
            <person name="Loulseged H."/>
            <person name="Mungall K.L."/>
            <person name="Oliver K."/>
            <person name="Price C."/>
            <person name="Quail M.A."/>
            <person name="Urushihara H."/>
            <person name="Hernandez J."/>
            <person name="Rabbinowitsch E."/>
            <person name="Steffen D."/>
            <person name="Sanders M."/>
            <person name="Ma J."/>
            <person name="Kohara Y."/>
            <person name="Sharp S."/>
            <person name="Simmonds M.N."/>
            <person name="Spiegler S."/>
            <person name="Tivey A."/>
            <person name="Sugano S."/>
            <person name="White B."/>
            <person name="Walker D."/>
            <person name="Woodward J.R."/>
            <person name="Winckler T."/>
            <person name="Tanaka Y."/>
            <person name="Shaulsky G."/>
            <person name="Schleicher M."/>
            <person name="Weinstock G.M."/>
            <person name="Rosenthal A."/>
            <person name="Cox E.C."/>
            <person name="Chisholm R.L."/>
            <person name="Gibbs R.A."/>
            <person name="Loomis W.F."/>
            <person name="Platzer M."/>
            <person name="Kay R.R."/>
            <person name="Williams J.G."/>
            <person name="Dear P.H."/>
            <person name="Noegel A.A."/>
            <person name="Barrell B.G."/>
            <person name="Kuspa A."/>
        </authorList>
    </citation>
    <scope>NUCLEOTIDE SEQUENCE [LARGE SCALE GENOMIC DNA]</scope>
    <source>
        <strain>AX4</strain>
    </source>
</reference>